<feature type="chain" id="PRO_0000326550" description="OPA3-like protein">
    <location>
        <begin position="1"/>
        <end position="199"/>
    </location>
</feature>
<feature type="coiled-coil region" evidence="1">
    <location>
        <begin position="98"/>
        <end position="141"/>
    </location>
</feature>
<organism>
    <name type="scientific">Dictyostelium discoideum</name>
    <name type="common">Social amoeba</name>
    <dbReference type="NCBI Taxonomy" id="44689"/>
    <lineage>
        <taxon>Eukaryota</taxon>
        <taxon>Amoebozoa</taxon>
        <taxon>Evosea</taxon>
        <taxon>Eumycetozoa</taxon>
        <taxon>Dictyostelia</taxon>
        <taxon>Dictyosteliales</taxon>
        <taxon>Dictyosteliaceae</taxon>
        <taxon>Dictyostelium</taxon>
    </lineage>
</organism>
<keyword id="KW-0175">Coiled coil</keyword>
<keyword id="KW-1185">Reference proteome</keyword>
<gene>
    <name type="ORF">DDB_G0284959</name>
</gene>
<accession>Q54NW1</accession>
<sequence length="199" mass="22350">MVLPLLKVGSLLIKSLAKPLSKQIKIRASKSPIFHDRVVRGARLWHKLDLKLTKFNGDTTRKPVDLNVNAAIDLGTEIVSEAFLLSVAIGLLLYETSRSSEKDKKKEEALQNRFKNLEEKLEVQQETINNLTNVIEAIQSSNPNLNIYIDPNQSTKSSIAEYINTHNIKLNSLKNAQTENDYKSISSEGIPNKRISNVN</sequence>
<dbReference type="EMBL" id="AAFI02000073">
    <property type="protein sequence ID" value="EAL64943.1"/>
    <property type="molecule type" value="Genomic_DNA"/>
</dbReference>
<dbReference type="RefSeq" id="XP_639956.1">
    <property type="nucleotide sequence ID" value="XM_634864.1"/>
</dbReference>
<dbReference type="SMR" id="Q54NW1"/>
<dbReference type="FunCoup" id="Q54NW1">
    <property type="interactions" value="46"/>
</dbReference>
<dbReference type="PaxDb" id="44689-DDB0237974"/>
<dbReference type="EnsemblProtists" id="EAL64943">
    <property type="protein sequence ID" value="EAL64943"/>
    <property type="gene ID" value="DDB_G0284959"/>
</dbReference>
<dbReference type="GeneID" id="8624868"/>
<dbReference type="KEGG" id="ddi:DDB_G0284959"/>
<dbReference type="dictyBase" id="DDB_G0284959"/>
<dbReference type="VEuPathDB" id="AmoebaDB:DDB_G0284959"/>
<dbReference type="eggNOG" id="KOG3335">
    <property type="taxonomic scope" value="Eukaryota"/>
</dbReference>
<dbReference type="HOGENOM" id="CLU_1374441_0_0_1"/>
<dbReference type="InParanoid" id="Q54NW1"/>
<dbReference type="OMA" id="WAEFEGT"/>
<dbReference type="PhylomeDB" id="Q54NW1"/>
<dbReference type="PRO" id="PR:Q54NW1"/>
<dbReference type="Proteomes" id="UP000002195">
    <property type="component" value="Chromosome 4"/>
</dbReference>
<dbReference type="GO" id="GO:0005739">
    <property type="term" value="C:mitochondrion"/>
    <property type="evidence" value="ECO:0000318"/>
    <property type="project" value="GO_Central"/>
</dbReference>
<dbReference type="GO" id="GO:0019216">
    <property type="term" value="P:regulation of lipid metabolic process"/>
    <property type="evidence" value="ECO:0000318"/>
    <property type="project" value="GO_Central"/>
</dbReference>
<dbReference type="InterPro" id="IPR010754">
    <property type="entry name" value="OPA3-like"/>
</dbReference>
<dbReference type="PANTHER" id="PTHR12499:SF0">
    <property type="entry name" value="OPTIC ATROPHY 3 PROTEIN"/>
    <property type="match status" value="1"/>
</dbReference>
<dbReference type="PANTHER" id="PTHR12499">
    <property type="entry name" value="OPTIC ATROPHY 3 PROTEIN OPA3"/>
    <property type="match status" value="1"/>
</dbReference>
<dbReference type="Pfam" id="PF07047">
    <property type="entry name" value="OPA3"/>
    <property type="match status" value="1"/>
</dbReference>
<comment type="similarity">
    <text evidence="2">Belongs to the OPA3 family.</text>
</comment>
<protein>
    <recommendedName>
        <fullName>OPA3-like protein</fullName>
    </recommendedName>
</protein>
<reference key="1">
    <citation type="journal article" date="2005" name="Nature">
        <title>The genome of the social amoeba Dictyostelium discoideum.</title>
        <authorList>
            <person name="Eichinger L."/>
            <person name="Pachebat J.A."/>
            <person name="Gloeckner G."/>
            <person name="Rajandream M.A."/>
            <person name="Sucgang R."/>
            <person name="Berriman M."/>
            <person name="Song J."/>
            <person name="Olsen R."/>
            <person name="Szafranski K."/>
            <person name="Xu Q."/>
            <person name="Tunggal B."/>
            <person name="Kummerfeld S."/>
            <person name="Madera M."/>
            <person name="Konfortov B.A."/>
            <person name="Rivero F."/>
            <person name="Bankier A.T."/>
            <person name="Lehmann R."/>
            <person name="Hamlin N."/>
            <person name="Davies R."/>
            <person name="Gaudet P."/>
            <person name="Fey P."/>
            <person name="Pilcher K."/>
            <person name="Chen G."/>
            <person name="Saunders D."/>
            <person name="Sodergren E.J."/>
            <person name="Davis P."/>
            <person name="Kerhornou A."/>
            <person name="Nie X."/>
            <person name="Hall N."/>
            <person name="Anjard C."/>
            <person name="Hemphill L."/>
            <person name="Bason N."/>
            <person name="Farbrother P."/>
            <person name="Desany B."/>
            <person name="Just E."/>
            <person name="Morio T."/>
            <person name="Rost R."/>
            <person name="Churcher C.M."/>
            <person name="Cooper J."/>
            <person name="Haydock S."/>
            <person name="van Driessche N."/>
            <person name="Cronin A."/>
            <person name="Goodhead I."/>
            <person name="Muzny D.M."/>
            <person name="Mourier T."/>
            <person name="Pain A."/>
            <person name="Lu M."/>
            <person name="Harper D."/>
            <person name="Lindsay R."/>
            <person name="Hauser H."/>
            <person name="James K.D."/>
            <person name="Quiles M."/>
            <person name="Madan Babu M."/>
            <person name="Saito T."/>
            <person name="Buchrieser C."/>
            <person name="Wardroper A."/>
            <person name="Felder M."/>
            <person name="Thangavelu M."/>
            <person name="Johnson D."/>
            <person name="Knights A."/>
            <person name="Loulseged H."/>
            <person name="Mungall K.L."/>
            <person name="Oliver K."/>
            <person name="Price C."/>
            <person name="Quail M.A."/>
            <person name="Urushihara H."/>
            <person name="Hernandez J."/>
            <person name="Rabbinowitsch E."/>
            <person name="Steffen D."/>
            <person name="Sanders M."/>
            <person name="Ma J."/>
            <person name="Kohara Y."/>
            <person name="Sharp S."/>
            <person name="Simmonds M.N."/>
            <person name="Spiegler S."/>
            <person name="Tivey A."/>
            <person name="Sugano S."/>
            <person name="White B."/>
            <person name="Walker D."/>
            <person name="Woodward J.R."/>
            <person name="Winckler T."/>
            <person name="Tanaka Y."/>
            <person name="Shaulsky G."/>
            <person name="Schleicher M."/>
            <person name="Weinstock G.M."/>
            <person name="Rosenthal A."/>
            <person name="Cox E.C."/>
            <person name="Chisholm R.L."/>
            <person name="Gibbs R.A."/>
            <person name="Loomis W.F."/>
            <person name="Platzer M."/>
            <person name="Kay R.R."/>
            <person name="Williams J.G."/>
            <person name="Dear P.H."/>
            <person name="Noegel A.A."/>
            <person name="Barrell B.G."/>
            <person name="Kuspa A."/>
        </authorList>
    </citation>
    <scope>NUCLEOTIDE SEQUENCE [LARGE SCALE GENOMIC DNA]</scope>
    <source>
        <strain>AX4</strain>
    </source>
</reference>
<name>OPA3_DICDI</name>
<evidence type="ECO:0000255" key="1"/>
<evidence type="ECO:0000305" key="2"/>
<proteinExistence type="inferred from homology"/>